<dbReference type="EC" id="7.5.2.7" evidence="1"/>
<dbReference type="EMBL" id="CP000020">
    <property type="protein sequence ID" value="AAW85940.1"/>
    <property type="molecule type" value="Genomic_DNA"/>
</dbReference>
<dbReference type="RefSeq" id="WP_011262035.1">
    <property type="nucleotide sequence ID" value="NC_006840.2"/>
</dbReference>
<dbReference type="RefSeq" id="YP_204828.1">
    <property type="nucleotide sequence ID" value="NC_006840.2"/>
</dbReference>
<dbReference type="SMR" id="Q5E4V6"/>
<dbReference type="STRING" id="312309.VF_1445"/>
<dbReference type="EnsemblBacteria" id="AAW85940">
    <property type="protein sequence ID" value="AAW85940"/>
    <property type="gene ID" value="VF_1445"/>
</dbReference>
<dbReference type="GeneID" id="54164120"/>
<dbReference type="KEGG" id="vfi:VF_1445"/>
<dbReference type="PATRIC" id="fig|312309.11.peg.1461"/>
<dbReference type="eggNOG" id="COG1129">
    <property type="taxonomic scope" value="Bacteria"/>
</dbReference>
<dbReference type="HOGENOM" id="CLU_000604_92_3_6"/>
<dbReference type="OrthoDB" id="9776369at2"/>
<dbReference type="Proteomes" id="UP000000537">
    <property type="component" value="Chromosome I"/>
</dbReference>
<dbReference type="GO" id="GO:0005886">
    <property type="term" value="C:plasma membrane"/>
    <property type="evidence" value="ECO:0007669"/>
    <property type="project" value="UniProtKB-SubCell"/>
</dbReference>
<dbReference type="GO" id="GO:0015611">
    <property type="term" value="F:ABC-type D-ribose transporter activity"/>
    <property type="evidence" value="ECO:0007669"/>
    <property type="project" value="UniProtKB-EC"/>
</dbReference>
<dbReference type="GO" id="GO:0005524">
    <property type="term" value="F:ATP binding"/>
    <property type="evidence" value="ECO:0007669"/>
    <property type="project" value="UniProtKB-KW"/>
</dbReference>
<dbReference type="GO" id="GO:0016887">
    <property type="term" value="F:ATP hydrolysis activity"/>
    <property type="evidence" value="ECO:0007669"/>
    <property type="project" value="InterPro"/>
</dbReference>
<dbReference type="CDD" id="cd03216">
    <property type="entry name" value="ABC_Carb_Monos_I"/>
    <property type="match status" value="1"/>
</dbReference>
<dbReference type="CDD" id="cd03215">
    <property type="entry name" value="ABC_Carb_Monos_II"/>
    <property type="match status" value="1"/>
</dbReference>
<dbReference type="FunFam" id="3.40.50.300:FF:000126">
    <property type="entry name" value="Galactose/methyl galactoside import ATP-binding protein MglA"/>
    <property type="match status" value="1"/>
</dbReference>
<dbReference type="FunFam" id="3.40.50.300:FF:000127">
    <property type="entry name" value="Ribose import ATP-binding protein RbsA"/>
    <property type="match status" value="1"/>
</dbReference>
<dbReference type="Gene3D" id="3.40.50.300">
    <property type="entry name" value="P-loop containing nucleotide triphosphate hydrolases"/>
    <property type="match status" value="2"/>
</dbReference>
<dbReference type="InterPro" id="IPR003593">
    <property type="entry name" value="AAA+_ATPase"/>
</dbReference>
<dbReference type="InterPro" id="IPR050107">
    <property type="entry name" value="ABC_carbohydrate_import_ATPase"/>
</dbReference>
<dbReference type="InterPro" id="IPR003439">
    <property type="entry name" value="ABC_transporter-like_ATP-bd"/>
</dbReference>
<dbReference type="InterPro" id="IPR017871">
    <property type="entry name" value="ABC_transporter-like_CS"/>
</dbReference>
<dbReference type="InterPro" id="IPR027417">
    <property type="entry name" value="P-loop_NTPase"/>
</dbReference>
<dbReference type="NCBIfam" id="NF008030">
    <property type="entry name" value="PRK10762.1"/>
    <property type="match status" value="1"/>
</dbReference>
<dbReference type="PANTHER" id="PTHR43790">
    <property type="entry name" value="CARBOHYDRATE TRANSPORT ATP-BINDING PROTEIN MG119-RELATED"/>
    <property type="match status" value="1"/>
</dbReference>
<dbReference type="PANTHER" id="PTHR43790:SF3">
    <property type="entry name" value="D-ALLOSE IMPORT ATP-BINDING PROTEIN ALSA-RELATED"/>
    <property type="match status" value="1"/>
</dbReference>
<dbReference type="Pfam" id="PF00005">
    <property type="entry name" value="ABC_tran"/>
    <property type="match status" value="2"/>
</dbReference>
<dbReference type="SMART" id="SM00382">
    <property type="entry name" value="AAA"/>
    <property type="match status" value="2"/>
</dbReference>
<dbReference type="SUPFAM" id="SSF52540">
    <property type="entry name" value="P-loop containing nucleoside triphosphate hydrolases"/>
    <property type="match status" value="2"/>
</dbReference>
<dbReference type="PROSITE" id="PS00211">
    <property type="entry name" value="ABC_TRANSPORTER_1"/>
    <property type="match status" value="2"/>
</dbReference>
<dbReference type="PROSITE" id="PS50893">
    <property type="entry name" value="ABC_TRANSPORTER_2"/>
    <property type="match status" value="2"/>
</dbReference>
<dbReference type="PROSITE" id="PS51254">
    <property type="entry name" value="RBSA"/>
    <property type="match status" value="1"/>
</dbReference>
<protein>
    <recommendedName>
        <fullName evidence="1">Ribose import ATP-binding protein RbsA</fullName>
        <ecNumber evidence="1">7.5.2.7</ecNumber>
    </recommendedName>
</protein>
<reference key="1">
    <citation type="journal article" date="2005" name="Proc. Natl. Acad. Sci. U.S.A.">
        <title>Complete genome sequence of Vibrio fischeri: a symbiotic bacterium with pathogenic congeners.</title>
        <authorList>
            <person name="Ruby E.G."/>
            <person name="Urbanowski M."/>
            <person name="Campbell J."/>
            <person name="Dunn A."/>
            <person name="Faini M."/>
            <person name="Gunsalus R."/>
            <person name="Lostroh P."/>
            <person name="Lupp C."/>
            <person name="McCann J."/>
            <person name="Millikan D."/>
            <person name="Schaefer A."/>
            <person name="Stabb E."/>
            <person name="Stevens A."/>
            <person name="Visick K."/>
            <person name="Whistler C."/>
            <person name="Greenberg E.P."/>
        </authorList>
    </citation>
    <scope>NUCLEOTIDE SEQUENCE [LARGE SCALE GENOMIC DNA]</scope>
    <source>
        <strain>ATCC 700601 / ES114</strain>
    </source>
</reference>
<sequence length="504" mass="55247">MTQAILELNGIEKAFPGVKALDGACLNVYPGKVMALMGENGAGKSTLMKSLTGIYAMDAGEIRYEGKAVNFNGPKHSQESGISIIHQELNLIPELTIAENIFLGREKTNAFGGIKWSEMYKDADALLKRLNVKHHSRQLLGELSLGEQQMVEIAKALSFKSKVIIMDEPTDALTDTETESLFKVINELRDEGCGIVYISHRLKEIFEICDDITVLRDGKFIGERVVADIDEDTLIEMMVGRRLDEQYPRIDVQHGEKSLELFDVSGPGVHNVSFSLDRGEILGISGLMGAGRTELMKIIYGALPMTCGAIKLNNKMINPISPRDGLANGIAYISEDRKGDGLVLGLSVKENMSICSLDQLSKGIQLDHHAEVTAVEDFIRLFNIKTPTRDQIIGNLSGGNQQKVAIAKGLMTRPKVLILDEPTRGVDVGAKKEIYQLINQFKAEGMSIILVSSEMPEVLGMSDRILVMHEGRISGEFMAKDADQEKLLACAVGKTVEQNVEVTA</sequence>
<evidence type="ECO:0000255" key="1">
    <source>
        <dbReference type="HAMAP-Rule" id="MF_01716"/>
    </source>
</evidence>
<name>RBSA_ALIF1</name>
<proteinExistence type="inferred from homology"/>
<gene>
    <name evidence="1" type="primary">rbsA</name>
    <name type="ordered locus">VF_1445</name>
</gene>
<accession>Q5E4V6</accession>
<organism>
    <name type="scientific">Aliivibrio fischeri (strain ATCC 700601 / ES114)</name>
    <name type="common">Vibrio fischeri</name>
    <dbReference type="NCBI Taxonomy" id="312309"/>
    <lineage>
        <taxon>Bacteria</taxon>
        <taxon>Pseudomonadati</taxon>
        <taxon>Pseudomonadota</taxon>
        <taxon>Gammaproteobacteria</taxon>
        <taxon>Vibrionales</taxon>
        <taxon>Vibrionaceae</taxon>
        <taxon>Aliivibrio</taxon>
    </lineage>
</organism>
<comment type="function">
    <text evidence="1">Part of the ABC transporter complex RbsABC involved in ribose import. Responsible for energy coupling to the transport system.</text>
</comment>
<comment type="catalytic activity">
    <reaction evidence="1">
        <text>D-ribose(out) + ATP + H2O = D-ribose(in) + ADP + phosphate + H(+)</text>
        <dbReference type="Rhea" id="RHEA:29903"/>
        <dbReference type="ChEBI" id="CHEBI:15377"/>
        <dbReference type="ChEBI" id="CHEBI:15378"/>
        <dbReference type="ChEBI" id="CHEBI:30616"/>
        <dbReference type="ChEBI" id="CHEBI:43474"/>
        <dbReference type="ChEBI" id="CHEBI:47013"/>
        <dbReference type="ChEBI" id="CHEBI:456216"/>
        <dbReference type="EC" id="7.5.2.7"/>
    </reaction>
</comment>
<comment type="subunit">
    <text evidence="1">The complex is composed of an ATP-binding protein (RbsA), two transmembrane proteins (RbsC) and a solute-binding protein (RbsB).</text>
</comment>
<comment type="subcellular location">
    <subcellularLocation>
        <location evidence="1">Cell inner membrane</location>
        <topology evidence="1">Peripheral membrane protein</topology>
    </subcellularLocation>
</comment>
<comment type="similarity">
    <text evidence="1">Belongs to the ABC transporter superfamily. Ribose importer (TC 3.A.1.2.1) family.</text>
</comment>
<keyword id="KW-0067">ATP-binding</keyword>
<keyword id="KW-0997">Cell inner membrane</keyword>
<keyword id="KW-1003">Cell membrane</keyword>
<keyword id="KW-0472">Membrane</keyword>
<keyword id="KW-0547">Nucleotide-binding</keyword>
<keyword id="KW-1185">Reference proteome</keyword>
<keyword id="KW-0677">Repeat</keyword>
<keyword id="KW-0762">Sugar transport</keyword>
<keyword id="KW-1278">Translocase</keyword>
<keyword id="KW-0813">Transport</keyword>
<feature type="chain" id="PRO_0000261116" description="Ribose import ATP-binding protein RbsA">
    <location>
        <begin position="1"/>
        <end position="504"/>
    </location>
</feature>
<feature type="domain" description="ABC transporter 1" evidence="1">
    <location>
        <begin position="6"/>
        <end position="242"/>
    </location>
</feature>
<feature type="domain" description="ABC transporter 2" evidence="1">
    <location>
        <begin position="250"/>
        <end position="495"/>
    </location>
</feature>
<feature type="binding site" evidence="1">
    <location>
        <begin position="38"/>
        <end position="45"/>
    </location>
    <ligand>
        <name>ATP</name>
        <dbReference type="ChEBI" id="CHEBI:30616"/>
    </ligand>
</feature>